<reference key="1">
    <citation type="submission" date="2007-11" db="EMBL/GenBank/DDBJ databases">
        <title>Complete sequence of chromosome of Shewanella baltica OS195.</title>
        <authorList>
            <consortium name="US DOE Joint Genome Institute"/>
            <person name="Copeland A."/>
            <person name="Lucas S."/>
            <person name="Lapidus A."/>
            <person name="Barry K."/>
            <person name="Glavina del Rio T."/>
            <person name="Dalin E."/>
            <person name="Tice H."/>
            <person name="Pitluck S."/>
            <person name="Chain P."/>
            <person name="Malfatti S."/>
            <person name="Shin M."/>
            <person name="Vergez L."/>
            <person name="Schmutz J."/>
            <person name="Larimer F."/>
            <person name="Land M."/>
            <person name="Hauser L."/>
            <person name="Kyrpides N."/>
            <person name="Kim E."/>
            <person name="Brettar I."/>
            <person name="Rodrigues J."/>
            <person name="Konstantinidis K."/>
            <person name="Klappenbach J."/>
            <person name="Hofle M."/>
            <person name="Tiedje J."/>
            <person name="Richardson P."/>
        </authorList>
    </citation>
    <scope>NUCLEOTIDE SEQUENCE [LARGE SCALE GENOMIC DNA]</scope>
    <source>
        <strain>OS195</strain>
    </source>
</reference>
<organism>
    <name type="scientific">Shewanella baltica (strain OS195)</name>
    <dbReference type="NCBI Taxonomy" id="399599"/>
    <lineage>
        <taxon>Bacteria</taxon>
        <taxon>Pseudomonadati</taxon>
        <taxon>Pseudomonadota</taxon>
        <taxon>Gammaproteobacteria</taxon>
        <taxon>Alteromonadales</taxon>
        <taxon>Shewanellaceae</taxon>
        <taxon>Shewanella</taxon>
    </lineage>
</organism>
<dbReference type="EMBL" id="CP000891">
    <property type="protein sequence ID" value="ABX48246.1"/>
    <property type="molecule type" value="Genomic_DNA"/>
</dbReference>
<dbReference type="RefSeq" id="WP_006080527.1">
    <property type="nucleotide sequence ID" value="NC_009997.1"/>
</dbReference>
<dbReference type="SMR" id="A9L429"/>
<dbReference type="GeneID" id="11771357"/>
<dbReference type="KEGG" id="sbn:Sbal195_1070"/>
<dbReference type="HOGENOM" id="CLU_095424_4_1_6"/>
<dbReference type="Proteomes" id="UP000000770">
    <property type="component" value="Chromosome"/>
</dbReference>
<dbReference type="GO" id="GO:0022625">
    <property type="term" value="C:cytosolic large ribosomal subunit"/>
    <property type="evidence" value="ECO:0007669"/>
    <property type="project" value="TreeGrafter"/>
</dbReference>
<dbReference type="GO" id="GO:0003735">
    <property type="term" value="F:structural constituent of ribosome"/>
    <property type="evidence" value="ECO:0007669"/>
    <property type="project" value="InterPro"/>
</dbReference>
<dbReference type="GO" id="GO:0006412">
    <property type="term" value="P:translation"/>
    <property type="evidence" value="ECO:0007669"/>
    <property type="project" value="UniProtKB-UniRule"/>
</dbReference>
<dbReference type="FunFam" id="2.40.50.100:FF:000001">
    <property type="entry name" value="50S ribosomal protein L27"/>
    <property type="match status" value="1"/>
</dbReference>
<dbReference type="Gene3D" id="2.40.50.100">
    <property type="match status" value="1"/>
</dbReference>
<dbReference type="HAMAP" id="MF_00539">
    <property type="entry name" value="Ribosomal_bL27"/>
    <property type="match status" value="1"/>
</dbReference>
<dbReference type="InterPro" id="IPR001684">
    <property type="entry name" value="Ribosomal_bL27"/>
</dbReference>
<dbReference type="InterPro" id="IPR018261">
    <property type="entry name" value="Ribosomal_bL27_CS"/>
</dbReference>
<dbReference type="NCBIfam" id="TIGR00062">
    <property type="entry name" value="L27"/>
    <property type="match status" value="1"/>
</dbReference>
<dbReference type="PANTHER" id="PTHR15893:SF0">
    <property type="entry name" value="LARGE RIBOSOMAL SUBUNIT PROTEIN BL27M"/>
    <property type="match status" value="1"/>
</dbReference>
<dbReference type="PANTHER" id="PTHR15893">
    <property type="entry name" value="RIBOSOMAL PROTEIN L27"/>
    <property type="match status" value="1"/>
</dbReference>
<dbReference type="Pfam" id="PF01016">
    <property type="entry name" value="Ribosomal_L27"/>
    <property type="match status" value="1"/>
</dbReference>
<dbReference type="PRINTS" id="PR00063">
    <property type="entry name" value="RIBOSOMALL27"/>
</dbReference>
<dbReference type="SUPFAM" id="SSF110324">
    <property type="entry name" value="Ribosomal L27 protein-like"/>
    <property type="match status" value="1"/>
</dbReference>
<dbReference type="PROSITE" id="PS00831">
    <property type="entry name" value="RIBOSOMAL_L27"/>
    <property type="match status" value="1"/>
</dbReference>
<name>RL27_SHEB9</name>
<evidence type="ECO:0000255" key="1">
    <source>
        <dbReference type="HAMAP-Rule" id="MF_00539"/>
    </source>
</evidence>
<evidence type="ECO:0000256" key="2">
    <source>
        <dbReference type="SAM" id="MobiDB-lite"/>
    </source>
</evidence>
<evidence type="ECO:0000305" key="3"/>
<proteinExistence type="inferred from homology"/>
<keyword id="KW-0687">Ribonucleoprotein</keyword>
<keyword id="KW-0689">Ribosomal protein</keyword>
<gene>
    <name evidence="1" type="primary">rpmA</name>
    <name type="ordered locus">Sbal195_1070</name>
</gene>
<feature type="chain" id="PRO_1000081910" description="Large ribosomal subunit protein bL27">
    <location>
        <begin position="1"/>
        <end position="84"/>
    </location>
</feature>
<feature type="region of interest" description="Disordered" evidence="2">
    <location>
        <begin position="1"/>
        <end position="22"/>
    </location>
</feature>
<comment type="similarity">
    <text evidence="1">Belongs to the bacterial ribosomal protein bL27 family.</text>
</comment>
<protein>
    <recommendedName>
        <fullName evidence="1">Large ribosomal subunit protein bL27</fullName>
    </recommendedName>
    <alternativeName>
        <fullName evidence="3">50S ribosomal protein L27</fullName>
    </alternativeName>
</protein>
<sequence>MAHKKAGGSTRNGRDSESKRLGVKRFGGESVLAGNIIVRQRGTKFHAGVNVGIGRDHTLFALTDGKVKFEVKGANNRKFISIEA</sequence>
<accession>A9L429</accession>